<organism>
    <name type="scientific">Arabidopsis thaliana</name>
    <name type="common">Mouse-ear cress</name>
    <dbReference type="NCBI Taxonomy" id="3702"/>
    <lineage>
        <taxon>Eukaryota</taxon>
        <taxon>Viridiplantae</taxon>
        <taxon>Streptophyta</taxon>
        <taxon>Embryophyta</taxon>
        <taxon>Tracheophyta</taxon>
        <taxon>Spermatophyta</taxon>
        <taxon>Magnoliopsida</taxon>
        <taxon>eudicotyledons</taxon>
        <taxon>Gunneridae</taxon>
        <taxon>Pentapetalae</taxon>
        <taxon>rosids</taxon>
        <taxon>malvids</taxon>
        <taxon>Brassicales</taxon>
        <taxon>Brassicaceae</taxon>
        <taxon>Camelineae</taxon>
        <taxon>Arabidopsis</taxon>
    </lineage>
</organism>
<gene>
    <name type="ordered locus">At2g24130</name>
    <name type="ORF">F27D4.4</name>
</gene>
<feature type="signal peptide" evidence="4">
    <location>
        <begin position="1"/>
        <end position="20"/>
    </location>
</feature>
<feature type="chain" id="PRO_0000401359" description="Putative leucine-rich repeat receptor-like serine/threonine-protein kinase At2g24130">
    <location>
        <begin position="21"/>
        <end position="980"/>
    </location>
</feature>
<feature type="topological domain" description="Extracellular" evidence="4">
    <location>
        <begin position="21"/>
        <end position="593"/>
    </location>
</feature>
<feature type="transmembrane region" description="Helical" evidence="4">
    <location>
        <begin position="594"/>
        <end position="614"/>
    </location>
</feature>
<feature type="topological domain" description="Cytoplasmic" evidence="4">
    <location>
        <begin position="615"/>
        <end position="980"/>
    </location>
</feature>
<feature type="repeat" description="LRR 1">
    <location>
        <begin position="65"/>
        <end position="89"/>
    </location>
</feature>
<feature type="repeat" description="LRR 2">
    <location>
        <begin position="90"/>
        <end position="113"/>
    </location>
</feature>
<feature type="repeat" description="LRR 3">
    <location>
        <begin position="115"/>
        <end position="138"/>
    </location>
</feature>
<feature type="repeat" description="LRR 4">
    <location>
        <begin position="139"/>
        <end position="162"/>
    </location>
</feature>
<feature type="repeat" description="LRR 5">
    <location>
        <begin position="165"/>
        <end position="189"/>
    </location>
</feature>
<feature type="repeat" description="LRR 6">
    <location>
        <begin position="191"/>
        <end position="214"/>
    </location>
</feature>
<feature type="repeat" description="LRR 7">
    <location>
        <begin position="215"/>
        <end position="238"/>
    </location>
</feature>
<feature type="repeat" description="LRR 8">
    <location>
        <begin position="240"/>
        <end position="263"/>
    </location>
</feature>
<feature type="repeat" description="LRR 9">
    <location>
        <begin position="271"/>
        <end position="295"/>
    </location>
</feature>
<feature type="repeat" description="LRR 10">
    <location>
        <begin position="296"/>
        <end position="320"/>
    </location>
</feature>
<feature type="repeat" description="LRR 11">
    <location>
        <begin position="322"/>
        <end position="344"/>
    </location>
</feature>
<feature type="repeat" description="LRR 12">
    <location>
        <begin position="345"/>
        <end position="370"/>
    </location>
</feature>
<feature type="repeat" description="LRR 13">
    <location>
        <begin position="372"/>
        <end position="391"/>
    </location>
</feature>
<feature type="repeat" description="LRR 14">
    <location>
        <begin position="392"/>
        <end position="416"/>
    </location>
</feature>
<feature type="repeat" description="LRR 15">
    <location>
        <begin position="417"/>
        <end position="440"/>
    </location>
</feature>
<feature type="repeat" description="LRR 16">
    <location>
        <begin position="442"/>
        <end position="463"/>
    </location>
</feature>
<feature type="repeat" description="LRR 17">
    <location>
        <begin position="464"/>
        <end position="490"/>
    </location>
</feature>
<feature type="repeat" description="LRR 18">
    <location>
        <begin position="491"/>
        <end position="514"/>
    </location>
</feature>
<feature type="repeat" description="LRR 19">
    <location>
        <begin position="515"/>
        <end position="537"/>
    </location>
</feature>
<feature type="repeat" description="LRR 20">
    <location>
        <begin position="539"/>
        <end position="563"/>
    </location>
</feature>
<feature type="domain" description="Protein kinase" evidence="5">
    <location>
        <begin position="661"/>
        <end position="960"/>
    </location>
</feature>
<feature type="active site" description="Proton acceptor" evidence="5 6">
    <location>
        <position position="788"/>
    </location>
</feature>
<feature type="binding site" evidence="5">
    <location>
        <begin position="667"/>
        <end position="675"/>
    </location>
    <ligand>
        <name>ATP</name>
        <dbReference type="ChEBI" id="CHEBI:30616"/>
    </ligand>
</feature>
<feature type="binding site" evidence="5">
    <location>
        <position position="689"/>
    </location>
    <ligand>
        <name>ATP</name>
        <dbReference type="ChEBI" id="CHEBI:30616"/>
    </ligand>
</feature>
<feature type="modified residue" description="Phosphothreonine" evidence="3">
    <location>
        <position position="658"/>
    </location>
</feature>
<feature type="modified residue" description="Phosphotyrosine" evidence="2">
    <location>
        <position position="775"/>
    </location>
</feature>
<feature type="modified residue" description="Phosphotyrosine" evidence="2">
    <location>
        <position position="841"/>
    </location>
</feature>
<feature type="glycosylation site" description="N-linked (GlcNAc...) asparagine" evidence="4">
    <location>
        <position position="55"/>
    </location>
</feature>
<feature type="glycosylation site" description="N-linked (GlcNAc...) asparagine" evidence="4">
    <location>
        <position position="88"/>
    </location>
</feature>
<feature type="glycosylation site" description="N-linked (GlcNAc...) asparagine" evidence="4">
    <location>
        <position position="152"/>
    </location>
</feature>
<feature type="glycosylation site" description="N-linked (GlcNAc...) asparagine" evidence="4">
    <location>
        <position position="162"/>
    </location>
</feature>
<feature type="glycosylation site" description="N-linked (GlcNAc...) asparagine" evidence="4">
    <location>
        <position position="175"/>
    </location>
</feature>
<feature type="glycosylation site" description="N-linked (GlcNAc...) asparagine" evidence="4">
    <location>
        <position position="213"/>
    </location>
</feature>
<feature type="glycosylation site" description="N-linked (GlcNAc...) asparagine" evidence="4">
    <location>
        <position position="257"/>
    </location>
</feature>
<feature type="glycosylation site" description="N-linked (GlcNAc...) asparagine" evidence="4">
    <location>
        <position position="270"/>
    </location>
</feature>
<feature type="glycosylation site" description="N-linked (GlcNAc...) asparagine" evidence="4">
    <location>
        <position position="322"/>
    </location>
</feature>
<feature type="glycosylation site" description="N-linked (GlcNAc...) asparagine" evidence="4">
    <location>
        <position position="327"/>
    </location>
</feature>
<feature type="glycosylation site" description="N-linked (GlcNAc...) asparagine" evidence="4">
    <location>
        <position position="380"/>
    </location>
</feature>
<feature type="glycosylation site" description="N-linked (GlcNAc...) asparagine" evidence="4">
    <location>
        <position position="391"/>
    </location>
</feature>
<feature type="glycosylation site" description="N-linked (GlcNAc...) asparagine" evidence="4">
    <location>
        <position position="428"/>
    </location>
</feature>
<feature type="glycosylation site" description="N-linked (GlcNAc...) asparagine" evidence="4">
    <location>
        <position position="449"/>
    </location>
</feature>
<feature type="glycosylation site" description="N-linked (GlcNAc...) asparagine" evidence="4">
    <location>
        <position position="497"/>
    </location>
</feature>
<feature type="glycosylation site" description="N-linked (GlcNAc...) asparagine" evidence="4">
    <location>
        <position position="545"/>
    </location>
</feature>
<feature type="glycosylation site" description="N-linked (GlcNAc...) asparagine" evidence="4">
    <location>
        <position position="554"/>
    </location>
</feature>
<reference key="1">
    <citation type="journal article" date="1999" name="Nature">
        <title>Sequence and analysis of chromosome 2 of the plant Arabidopsis thaliana.</title>
        <authorList>
            <person name="Lin X."/>
            <person name="Kaul S."/>
            <person name="Rounsley S.D."/>
            <person name="Shea T.P."/>
            <person name="Benito M.-I."/>
            <person name="Town C.D."/>
            <person name="Fujii C.Y."/>
            <person name="Mason T.M."/>
            <person name="Bowman C.L."/>
            <person name="Barnstead M.E."/>
            <person name="Feldblyum T.V."/>
            <person name="Buell C.R."/>
            <person name="Ketchum K.A."/>
            <person name="Lee J.J."/>
            <person name="Ronning C.M."/>
            <person name="Koo H.L."/>
            <person name="Moffat K.S."/>
            <person name="Cronin L.A."/>
            <person name="Shen M."/>
            <person name="Pai G."/>
            <person name="Van Aken S."/>
            <person name="Umayam L."/>
            <person name="Tallon L.J."/>
            <person name="Gill J.E."/>
            <person name="Adams M.D."/>
            <person name="Carrera A.J."/>
            <person name="Creasy T.H."/>
            <person name="Goodman H.M."/>
            <person name="Somerville C.R."/>
            <person name="Copenhaver G.P."/>
            <person name="Preuss D."/>
            <person name="Nierman W.C."/>
            <person name="White O."/>
            <person name="Eisen J.A."/>
            <person name="Salzberg S.L."/>
            <person name="Fraser C.M."/>
            <person name="Venter J.C."/>
        </authorList>
    </citation>
    <scope>NUCLEOTIDE SEQUENCE [LARGE SCALE GENOMIC DNA]</scope>
    <source>
        <strain>cv. Columbia</strain>
    </source>
</reference>
<reference key="2">
    <citation type="journal article" date="2017" name="Plant J.">
        <title>Araport11: a complete reannotation of the Arabidopsis thaliana reference genome.</title>
        <authorList>
            <person name="Cheng C.Y."/>
            <person name="Krishnakumar V."/>
            <person name="Chan A.P."/>
            <person name="Thibaud-Nissen F."/>
            <person name="Schobel S."/>
            <person name="Town C.D."/>
        </authorList>
    </citation>
    <scope>GENOME REANNOTATION</scope>
    <source>
        <strain>cv. Columbia</strain>
    </source>
</reference>
<dbReference type="EC" id="2.7.11.1"/>
<dbReference type="EMBL" id="AC005967">
    <property type="protein sequence ID" value="AAD03374.1"/>
    <property type="molecule type" value="Genomic_DNA"/>
</dbReference>
<dbReference type="EMBL" id="CP002685">
    <property type="protein sequence ID" value="AEC07532.1"/>
    <property type="molecule type" value="Genomic_DNA"/>
</dbReference>
<dbReference type="PIR" id="H84632">
    <property type="entry name" value="H84632"/>
</dbReference>
<dbReference type="RefSeq" id="NP_179990.1">
    <property type="nucleotide sequence ID" value="NM_127974.1"/>
</dbReference>
<dbReference type="SMR" id="Q9ZUI0"/>
<dbReference type="BioGRID" id="2299">
    <property type="interactions" value="9"/>
</dbReference>
<dbReference type="FunCoup" id="Q9ZUI0">
    <property type="interactions" value="1"/>
</dbReference>
<dbReference type="STRING" id="3702.Q9ZUI0"/>
<dbReference type="GlyGen" id="Q9ZUI0">
    <property type="glycosylation" value="17 sites"/>
</dbReference>
<dbReference type="PaxDb" id="3702-AT2G24130.1"/>
<dbReference type="EnsemblPlants" id="AT2G24130.1">
    <property type="protein sequence ID" value="AT2G24130.1"/>
    <property type="gene ID" value="AT2G24130"/>
</dbReference>
<dbReference type="GeneID" id="816947"/>
<dbReference type="Gramene" id="AT2G24130.1">
    <property type="protein sequence ID" value="AT2G24130.1"/>
    <property type="gene ID" value="AT2G24130"/>
</dbReference>
<dbReference type="KEGG" id="ath:AT2G24130"/>
<dbReference type="Araport" id="AT2G24130"/>
<dbReference type="TAIR" id="AT2G24130"/>
<dbReference type="eggNOG" id="ENOG502QPTD">
    <property type="taxonomic scope" value="Eukaryota"/>
</dbReference>
<dbReference type="HOGENOM" id="CLU_000288_22_0_1"/>
<dbReference type="InParanoid" id="Q9ZUI0"/>
<dbReference type="OMA" id="IPLKNEC"/>
<dbReference type="PhylomeDB" id="Q9ZUI0"/>
<dbReference type="PRO" id="PR:Q9ZUI0"/>
<dbReference type="Proteomes" id="UP000006548">
    <property type="component" value="Chromosome 2"/>
</dbReference>
<dbReference type="ExpressionAtlas" id="Q9ZUI0">
    <property type="expression patterns" value="baseline and differential"/>
</dbReference>
<dbReference type="GO" id="GO:0005886">
    <property type="term" value="C:plasma membrane"/>
    <property type="evidence" value="ECO:0007669"/>
    <property type="project" value="UniProtKB-SubCell"/>
</dbReference>
<dbReference type="GO" id="GO:0005524">
    <property type="term" value="F:ATP binding"/>
    <property type="evidence" value="ECO:0007669"/>
    <property type="project" value="UniProtKB-KW"/>
</dbReference>
<dbReference type="GO" id="GO:0106310">
    <property type="term" value="F:protein serine kinase activity"/>
    <property type="evidence" value="ECO:0007669"/>
    <property type="project" value="RHEA"/>
</dbReference>
<dbReference type="GO" id="GO:0004674">
    <property type="term" value="F:protein serine/threonine kinase activity"/>
    <property type="evidence" value="ECO:0007669"/>
    <property type="project" value="UniProtKB-KW"/>
</dbReference>
<dbReference type="CDD" id="cd14066">
    <property type="entry name" value="STKc_IRAK"/>
    <property type="match status" value="1"/>
</dbReference>
<dbReference type="FunFam" id="3.80.10.10:FF:000383">
    <property type="entry name" value="Leucine-rich repeat receptor protein kinase EMS1"/>
    <property type="match status" value="2"/>
</dbReference>
<dbReference type="FunFam" id="3.80.10.10:FF:000041">
    <property type="entry name" value="LRR receptor-like serine/threonine-protein kinase ERECTA"/>
    <property type="match status" value="1"/>
</dbReference>
<dbReference type="FunFam" id="3.80.10.10:FF:000095">
    <property type="entry name" value="LRR receptor-like serine/threonine-protein kinase GSO1"/>
    <property type="match status" value="1"/>
</dbReference>
<dbReference type="FunFam" id="1.10.510.10:FF:000358">
    <property type="entry name" value="Putative leucine-rich repeat receptor-like serine/threonine-protein kinase"/>
    <property type="match status" value="1"/>
</dbReference>
<dbReference type="Gene3D" id="3.30.200.20">
    <property type="entry name" value="Phosphorylase Kinase, domain 1"/>
    <property type="match status" value="1"/>
</dbReference>
<dbReference type="Gene3D" id="3.80.10.10">
    <property type="entry name" value="Ribonuclease Inhibitor"/>
    <property type="match status" value="3"/>
</dbReference>
<dbReference type="Gene3D" id="1.10.510.10">
    <property type="entry name" value="Transferase(Phosphotransferase) domain 1"/>
    <property type="match status" value="1"/>
</dbReference>
<dbReference type="InterPro" id="IPR011009">
    <property type="entry name" value="Kinase-like_dom_sf"/>
</dbReference>
<dbReference type="InterPro" id="IPR001611">
    <property type="entry name" value="Leu-rich_rpt"/>
</dbReference>
<dbReference type="InterPro" id="IPR003591">
    <property type="entry name" value="Leu-rich_rpt_typical-subtyp"/>
</dbReference>
<dbReference type="InterPro" id="IPR032675">
    <property type="entry name" value="LRR_dom_sf"/>
</dbReference>
<dbReference type="InterPro" id="IPR051716">
    <property type="entry name" value="Plant_RL_S/T_kinase"/>
</dbReference>
<dbReference type="InterPro" id="IPR000719">
    <property type="entry name" value="Prot_kinase_dom"/>
</dbReference>
<dbReference type="InterPro" id="IPR017441">
    <property type="entry name" value="Protein_kinase_ATP_BS"/>
</dbReference>
<dbReference type="InterPro" id="IPR008271">
    <property type="entry name" value="Ser/Thr_kinase_AS"/>
</dbReference>
<dbReference type="PANTHER" id="PTHR48053">
    <property type="entry name" value="LEUCINE RICH REPEAT FAMILY PROTEIN, EXPRESSED"/>
    <property type="match status" value="1"/>
</dbReference>
<dbReference type="PANTHER" id="PTHR48053:SF151">
    <property type="entry name" value="OS02G0216000 PROTEIN"/>
    <property type="match status" value="1"/>
</dbReference>
<dbReference type="Pfam" id="PF00560">
    <property type="entry name" value="LRR_1"/>
    <property type="match status" value="9"/>
</dbReference>
<dbReference type="Pfam" id="PF13855">
    <property type="entry name" value="LRR_8"/>
    <property type="match status" value="2"/>
</dbReference>
<dbReference type="Pfam" id="PF00069">
    <property type="entry name" value="Pkinase"/>
    <property type="match status" value="1"/>
</dbReference>
<dbReference type="PRINTS" id="PR00019">
    <property type="entry name" value="LEURICHRPT"/>
</dbReference>
<dbReference type="SMART" id="SM00369">
    <property type="entry name" value="LRR_TYP"/>
    <property type="match status" value="9"/>
</dbReference>
<dbReference type="SMART" id="SM00220">
    <property type="entry name" value="S_TKc"/>
    <property type="match status" value="1"/>
</dbReference>
<dbReference type="SUPFAM" id="SSF52058">
    <property type="entry name" value="L domain-like"/>
    <property type="match status" value="1"/>
</dbReference>
<dbReference type="SUPFAM" id="SSF56112">
    <property type="entry name" value="Protein kinase-like (PK-like)"/>
    <property type="match status" value="1"/>
</dbReference>
<dbReference type="SUPFAM" id="SSF52047">
    <property type="entry name" value="RNI-like"/>
    <property type="match status" value="1"/>
</dbReference>
<dbReference type="PROSITE" id="PS51450">
    <property type="entry name" value="LRR"/>
    <property type="match status" value="17"/>
</dbReference>
<dbReference type="PROSITE" id="PS00107">
    <property type="entry name" value="PROTEIN_KINASE_ATP"/>
    <property type="match status" value="1"/>
</dbReference>
<dbReference type="PROSITE" id="PS50011">
    <property type="entry name" value="PROTEIN_KINASE_DOM"/>
    <property type="match status" value="1"/>
</dbReference>
<dbReference type="PROSITE" id="PS00108">
    <property type="entry name" value="PROTEIN_KINASE_ST"/>
    <property type="match status" value="1"/>
</dbReference>
<proteinExistence type="inferred from homology"/>
<sequence>MDYCSLLVVSFLITVMTVLASKENDHELIKNPQNSLSSWISSSSSSSSMLVDVCNWSGVKCNKESTQVIELDISGRDLGGEISPSIANLTGLTVLDLSRNFFVGKIPPEIGSLHETLKQLSLSENLLHGNIPQELGLLNRLVYLDLGSNRLNGSIPVQLFCNGSSSSLQYIDLSNNSLTGEIPLNYHCHLKELRFLLLWSNKLTGTVPSSLSNSTNLKWMDLESNMLSGELPSQVISKMPQLQFLYLSYNHFVSHNNNTNLEPFFASLANSSDLQELELAGNSLGGEITSSVRHLSVNLVQIHLDQNRIHGSIPPEISNLLNLTLLNLSSNLLSGPIPRELCKLSKLERVYLSNNHLTGEIPMELGDIPRLGLLDVSRNNLSGSIPDSFGNLSQLRRLLLYGNHLSGTVPQSLGKCINLEILDLSHNNLTGTIPVEVVSNLRNLKLYLNLSSNHLSGPIPLELSKMDMVLSVDLSSNELSGKIPPQLGSCIALEHLNLSRNGFSSTLPSSLGQLPYLKELDVSFNRLTGAIPPSFQQSSTLKHLNFSFNLLSGNVSDKGSFSKLTIESFLGDSLLCGSIKGMQACKKKHKYPSVLLPVLLSLIATPVLCVFGYPLVQRSRFGKNLTVYAKEEVEDEEKQNQNDPKYPRISYQQLIAATGGFNASSLIGSGRFGHVYKGVLRNNTKVAVKVLDPKTALEFSGSFKRECQILKRTRHRNLIRIITTCSKPGFNALVLPLMPNGSLERHLYPGEYSSKNLDLIQLVNICSDVAEGIAYLHHYSPVKVVHCDLKPSNILLDDEMTALVTDFGISRLVQGVEETVSTDDSVSFGSTDGLLCGSVGYIAPEYGMGKRASTHGDVYSFGVLLLEIVSGRRPTDVLVNEGSSLHEFMKSHYPDSLEGIIEQALSRWKPQGKPEKCEKLWREVILEMIELGLVCTQYNPSTRPDMLDVAHEMGRLKEYLFACPSLLHFSSQETQGEASS</sequence>
<name>Y2241_ARATH</name>
<accession>Q9ZUI0</accession>
<comment type="catalytic activity">
    <reaction>
        <text>L-seryl-[protein] + ATP = O-phospho-L-seryl-[protein] + ADP + H(+)</text>
        <dbReference type="Rhea" id="RHEA:17989"/>
        <dbReference type="Rhea" id="RHEA-COMP:9863"/>
        <dbReference type="Rhea" id="RHEA-COMP:11604"/>
        <dbReference type="ChEBI" id="CHEBI:15378"/>
        <dbReference type="ChEBI" id="CHEBI:29999"/>
        <dbReference type="ChEBI" id="CHEBI:30616"/>
        <dbReference type="ChEBI" id="CHEBI:83421"/>
        <dbReference type="ChEBI" id="CHEBI:456216"/>
        <dbReference type="EC" id="2.7.11.1"/>
    </reaction>
</comment>
<comment type="catalytic activity">
    <reaction>
        <text>L-threonyl-[protein] + ATP = O-phospho-L-threonyl-[protein] + ADP + H(+)</text>
        <dbReference type="Rhea" id="RHEA:46608"/>
        <dbReference type="Rhea" id="RHEA-COMP:11060"/>
        <dbReference type="Rhea" id="RHEA-COMP:11605"/>
        <dbReference type="ChEBI" id="CHEBI:15378"/>
        <dbReference type="ChEBI" id="CHEBI:30013"/>
        <dbReference type="ChEBI" id="CHEBI:30616"/>
        <dbReference type="ChEBI" id="CHEBI:61977"/>
        <dbReference type="ChEBI" id="CHEBI:456216"/>
        <dbReference type="EC" id="2.7.11.1"/>
    </reaction>
</comment>
<comment type="subcellular location">
    <subcellularLocation>
        <location evidence="1">Cell membrane</location>
        <topology evidence="1">Single-pass type I membrane protein</topology>
    </subcellularLocation>
</comment>
<comment type="similarity">
    <text evidence="5">Belongs to the protein kinase superfamily. Ser/Thr protein kinase family.</text>
</comment>
<protein>
    <recommendedName>
        <fullName>Putative leucine-rich repeat receptor-like serine/threonine-protein kinase At2g24130</fullName>
        <ecNumber>2.7.11.1</ecNumber>
    </recommendedName>
</protein>
<evidence type="ECO:0000250" key="1"/>
<evidence type="ECO:0000250" key="2">
    <source>
        <dbReference type="UniProtKB" id="C0LGT6"/>
    </source>
</evidence>
<evidence type="ECO:0000250" key="3">
    <source>
        <dbReference type="UniProtKB" id="O22476"/>
    </source>
</evidence>
<evidence type="ECO:0000255" key="4"/>
<evidence type="ECO:0000255" key="5">
    <source>
        <dbReference type="PROSITE-ProRule" id="PRU00159"/>
    </source>
</evidence>
<evidence type="ECO:0000255" key="6">
    <source>
        <dbReference type="PROSITE-ProRule" id="PRU10027"/>
    </source>
</evidence>
<keyword id="KW-0067">ATP-binding</keyword>
<keyword id="KW-1003">Cell membrane</keyword>
<keyword id="KW-0325">Glycoprotein</keyword>
<keyword id="KW-0418">Kinase</keyword>
<keyword id="KW-0433">Leucine-rich repeat</keyword>
<keyword id="KW-0472">Membrane</keyword>
<keyword id="KW-0547">Nucleotide-binding</keyword>
<keyword id="KW-0597">Phosphoprotein</keyword>
<keyword id="KW-0675">Receptor</keyword>
<keyword id="KW-1185">Reference proteome</keyword>
<keyword id="KW-0677">Repeat</keyword>
<keyword id="KW-0723">Serine/threonine-protein kinase</keyword>
<keyword id="KW-0732">Signal</keyword>
<keyword id="KW-0808">Transferase</keyword>
<keyword id="KW-0812">Transmembrane</keyword>
<keyword id="KW-1133">Transmembrane helix</keyword>